<proteinExistence type="inferred from homology"/>
<feature type="chain" id="PRO_0000158134" description="Imidazoleglycerol-phosphate dehydratase">
    <location>
        <begin position="1"/>
        <end position="200"/>
    </location>
</feature>
<feature type="binding site" evidence="2">
    <location>
        <position position="13"/>
    </location>
    <ligand>
        <name>substrate</name>
    </ligand>
</feature>
<feature type="binding site" evidence="2">
    <location>
        <begin position="39"/>
        <end position="47"/>
    </location>
    <ligand>
        <name>substrate</name>
    </ligand>
</feature>
<feature type="binding site" evidence="2">
    <location>
        <position position="39"/>
    </location>
    <ligand>
        <name>Mn(2+)</name>
        <dbReference type="ChEBI" id="CHEBI:29035"/>
        <label>1</label>
    </ligand>
</feature>
<feature type="binding site" evidence="2">
    <location>
        <begin position="68"/>
        <end position="72"/>
    </location>
    <ligand>
        <name>substrate</name>
    </ligand>
</feature>
<feature type="binding site" evidence="2">
    <location>
        <position position="68"/>
    </location>
    <ligand>
        <name>Mn(2+)</name>
        <dbReference type="ChEBI" id="CHEBI:29035"/>
        <label>2</label>
    </ligand>
</feature>
<feature type="binding site" evidence="2">
    <location>
        <position position="69"/>
    </location>
    <ligand>
        <name>Mn(2+)</name>
        <dbReference type="ChEBI" id="CHEBI:29035"/>
        <label>1</label>
    </ligand>
</feature>
<feature type="binding site" evidence="2">
    <location>
        <position position="72"/>
    </location>
    <ligand>
        <name>Mn(2+)</name>
        <dbReference type="ChEBI" id="CHEBI:29035"/>
        <label>2</label>
    </ligand>
</feature>
<feature type="binding site" evidence="2">
    <location>
        <position position="94"/>
    </location>
    <ligand>
        <name>substrate</name>
    </ligand>
</feature>
<feature type="binding site" evidence="2">
    <location>
        <position position="116"/>
    </location>
    <ligand>
        <name>substrate</name>
    </ligand>
</feature>
<feature type="binding site" evidence="2">
    <location>
        <position position="141"/>
    </location>
    <ligand>
        <name>Mn(2+)</name>
        <dbReference type="ChEBI" id="CHEBI:29035"/>
        <label>2</label>
    </ligand>
</feature>
<feature type="binding site" evidence="2">
    <location>
        <begin position="165"/>
        <end position="173"/>
    </location>
    <ligand>
        <name>substrate</name>
    </ligand>
</feature>
<feature type="binding site" evidence="2">
    <location>
        <position position="165"/>
    </location>
    <ligand>
        <name>Mn(2+)</name>
        <dbReference type="ChEBI" id="CHEBI:29035"/>
        <label>1</label>
    </ligand>
</feature>
<feature type="binding site" evidence="2">
    <location>
        <position position="166"/>
    </location>
    <ligand>
        <name>Mn(2+)</name>
        <dbReference type="ChEBI" id="CHEBI:29035"/>
        <label>2</label>
    </ligand>
</feature>
<feature type="binding site" evidence="2">
    <location>
        <position position="169"/>
    </location>
    <ligand>
        <name>Mn(2+)</name>
        <dbReference type="ChEBI" id="CHEBI:29035"/>
        <label>1</label>
    </ligand>
</feature>
<feature type="binding site" evidence="2">
    <location>
        <begin position="195"/>
        <end position="197"/>
    </location>
    <ligand>
        <name>substrate</name>
    </ligand>
</feature>
<feature type="sequence variant" description="In strain: IL1403.">
    <original>A</original>
    <variation>V</variation>
    <location>
        <position position="145"/>
    </location>
</feature>
<feature type="sequence variant" description="In strain: IL1403.">
    <original>H</original>
    <variation>N</variation>
    <location>
        <position position="159"/>
    </location>
</feature>
<feature type="sequence variant" description="In strain: IL1403.">
    <original>S</original>
    <variation>A</variation>
    <location>
        <position position="188"/>
    </location>
</feature>
<feature type="sequence conflict" description="In Ref. 1; AAB81905." evidence="4" ref="1">
    <original>A</original>
    <variation>D</variation>
    <location>
        <position position="85"/>
    </location>
</feature>
<keyword id="KW-0028">Amino-acid biosynthesis</keyword>
<keyword id="KW-0963">Cytoplasm</keyword>
<keyword id="KW-0368">Histidine biosynthesis</keyword>
<keyword id="KW-0456">Lyase</keyword>
<keyword id="KW-0464">Manganese</keyword>
<keyword id="KW-0479">Metal-binding</keyword>
<keyword id="KW-1185">Reference proteome</keyword>
<gene>
    <name type="primary">hisB</name>
    <name type="ordered locus">LL1210</name>
    <name type="ORF">L0068</name>
</gene>
<sequence>MTRISHITRNTKETQIELSINLDGTGQADISTGIGFLDHMLTLLTFHSDFDLKIIGHGDHETVGMDPHHLIEDVAIALGKCISEALGNKLGIRRYGSFTIPMDEALVTCDLDISGRPYLVFHADLSGNQKLGGYDTEMTEEFFRALAFNAGITLHLNEHYGQNTHHIIEGMFKSTARALKQAVSIDESKVGEIPSSKGVL</sequence>
<accession>Q02134</accession>
<accession>Q9CG93</accession>
<evidence type="ECO:0000250" key="1"/>
<evidence type="ECO:0000250" key="2">
    <source>
        <dbReference type="UniProtKB" id="O23346"/>
    </source>
</evidence>
<evidence type="ECO:0000250" key="3">
    <source>
        <dbReference type="UniProtKB" id="P9WML9"/>
    </source>
</evidence>
<evidence type="ECO:0000305" key="4"/>
<dbReference type="EC" id="4.2.1.19" evidence="3"/>
<dbReference type="EMBL" id="U92974">
    <property type="protein sequence ID" value="AAB81905.1"/>
    <property type="molecule type" value="Genomic_DNA"/>
</dbReference>
<dbReference type="EMBL" id="AE005176">
    <property type="protein sequence ID" value="AAK05308.1"/>
    <property type="molecule type" value="Genomic_DNA"/>
</dbReference>
<dbReference type="PIR" id="B86776">
    <property type="entry name" value="B86776"/>
</dbReference>
<dbReference type="PIR" id="G45734">
    <property type="entry name" value="G45734"/>
</dbReference>
<dbReference type="RefSeq" id="NP_267366.1">
    <property type="nucleotide sequence ID" value="NC_002662.1"/>
</dbReference>
<dbReference type="SMR" id="Q02134"/>
<dbReference type="PaxDb" id="272623-L0068"/>
<dbReference type="EnsemblBacteria" id="AAK05308">
    <property type="protein sequence ID" value="AAK05308"/>
    <property type="gene ID" value="L0068"/>
</dbReference>
<dbReference type="KEGG" id="lla:L0068"/>
<dbReference type="PATRIC" id="fig|272623.7.peg.1307"/>
<dbReference type="eggNOG" id="COG0131">
    <property type="taxonomic scope" value="Bacteria"/>
</dbReference>
<dbReference type="HOGENOM" id="CLU_044308_2_0_9"/>
<dbReference type="OrthoDB" id="9790411at2"/>
<dbReference type="UniPathway" id="UPA00031">
    <property type="reaction ID" value="UER00011"/>
</dbReference>
<dbReference type="Proteomes" id="UP000002196">
    <property type="component" value="Chromosome"/>
</dbReference>
<dbReference type="GO" id="GO:0005737">
    <property type="term" value="C:cytoplasm"/>
    <property type="evidence" value="ECO:0007669"/>
    <property type="project" value="UniProtKB-SubCell"/>
</dbReference>
<dbReference type="GO" id="GO:0004424">
    <property type="term" value="F:imidazoleglycerol-phosphate dehydratase activity"/>
    <property type="evidence" value="ECO:0007669"/>
    <property type="project" value="UniProtKB-UniRule"/>
</dbReference>
<dbReference type="GO" id="GO:0046872">
    <property type="term" value="F:metal ion binding"/>
    <property type="evidence" value="ECO:0007669"/>
    <property type="project" value="UniProtKB-KW"/>
</dbReference>
<dbReference type="GO" id="GO:0000105">
    <property type="term" value="P:L-histidine biosynthetic process"/>
    <property type="evidence" value="ECO:0007669"/>
    <property type="project" value="UniProtKB-UniRule"/>
</dbReference>
<dbReference type="CDD" id="cd07914">
    <property type="entry name" value="IGPD"/>
    <property type="match status" value="1"/>
</dbReference>
<dbReference type="FunFam" id="3.30.230.40:FF:000001">
    <property type="entry name" value="Imidazoleglycerol-phosphate dehydratase HisB"/>
    <property type="match status" value="1"/>
</dbReference>
<dbReference type="FunFam" id="3.30.230.40:FF:000003">
    <property type="entry name" value="Imidazoleglycerol-phosphate dehydratase HisB"/>
    <property type="match status" value="1"/>
</dbReference>
<dbReference type="Gene3D" id="3.30.230.40">
    <property type="entry name" value="Imidazole glycerol phosphate dehydratase, domain 1"/>
    <property type="match status" value="2"/>
</dbReference>
<dbReference type="HAMAP" id="MF_00076">
    <property type="entry name" value="HisB"/>
    <property type="match status" value="1"/>
</dbReference>
<dbReference type="InterPro" id="IPR038494">
    <property type="entry name" value="IGPD_sf"/>
</dbReference>
<dbReference type="InterPro" id="IPR000807">
    <property type="entry name" value="ImidazoleglycerolP_deHydtase"/>
</dbReference>
<dbReference type="InterPro" id="IPR020565">
    <property type="entry name" value="ImidazoleglycerP_deHydtase_CS"/>
</dbReference>
<dbReference type="InterPro" id="IPR020568">
    <property type="entry name" value="Ribosomal_Su5_D2-typ_SF"/>
</dbReference>
<dbReference type="NCBIfam" id="NF002111">
    <property type="entry name" value="PRK00951.2-1"/>
    <property type="match status" value="1"/>
</dbReference>
<dbReference type="NCBIfam" id="NF002114">
    <property type="entry name" value="PRK00951.2-4"/>
    <property type="match status" value="1"/>
</dbReference>
<dbReference type="PANTHER" id="PTHR23133:SF2">
    <property type="entry name" value="IMIDAZOLEGLYCEROL-PHOSPHATE DEHYDRATASE"/>
    <property type="match status" value="1"/>
</dbReference>
<dbReference type="PANTHER" id="PTHR23133">
    <property type="entry name" value="IMIDAZOLEGLYCEROL-PHOSPHATE DEHYDRATASE HIS7"/>
    <property type="match status" value="1"/>
</dbReference>
<dbReference type="Pfam" id="PF00475">
    <property type="entry name" value="IGPD"/>
    <property type="match status" value="1"/>
</dbReference>
<dbReference type="SUPFAM" id="SSF54211">
    <property type="entry name" value="Ribosomal protein S5 domain 2-like"/>
    <property type="match status" value="2"/>
</dbReference>
<dbReference type="PROSITE" id="PS00954">
    <property type="entry name" value="IGP_DEHYDRATASE_1"/>
    <property type="match status" value="1"/>
</dbReference>
<dbReference type="PROSITE" id="PS00955">
    <property type="entry name" value="IGP_DEHYDRATASE_2"/>
    <property type="match status" value="1"/>
</dbReference>
<protein>
    <recommendedName>
        <fullName>Imidazoleglycerol-phosphate dehydratase</fullName>
        <shortName>IGPD</shortName>
        <ecNumber evidence="3">4.2.1.19</ecNumber>
    </recommendedName>
</protein>
<name>HIS7_LACLA</name>
<reference key="1">
    <citation type="journal article" date="1992" name="J. Bacteriol.">
        <title>Histidine biosynthesis genes in Lactococcus lactis subsp. lactis.</title>
        <authorList>
            <person name="Delorme C."/>
            <person name="Ehrlich S.D."/>
            <person name="Renault P."/>
        </authorList>
    </citation>
    <scope>NUCLEOTIDE SEQUENCE [GENOMIC DNA]</scope>
    <source>
        <strain>NCDO 2118</strain>
    </source>
</reference>
<reference key="2">
    <citation type="journal article" date="1993" name="J. Bacteriol.">
        <title>Gene inactivation in Lactococcus lactis: histidine biosynthesis.</title>
        <authorList>
            <person name="Delorme C."/>
            <person name="Godon J.-J."/>
            <person name="Ehrlich S.D."/>
            <person name="Renault P."/>
        </authorList>
    </citation>
    <scope>NUCLEOTIDE SEQUENCE [GENOMIC DNA]</scope>
    <source>
        <strain>IL1403</strain>
    </source>
</reference>
<reference key="3">
    <citation type="journal article" date="2001" name="Genome Res.">
        <title>The complete genome sequence of the lactic acid bacterium Lactococcus lactis ssp. lactis IL1403.</title>
        <authorList>
            <person name="Bolotin A."/>
            <person name="Wincker P."/>
            <person name="Mauger S."/>
            <person name="Jaillon O."/>
            <person name="Malarme K."/>
            <person name="Weissenbach J."/>
            <person name="Ehrlich S.D."/>
            <person name="Sorokin A."/>
        </authorList>
    </citation>
    <scope>NUCLEOTIDE SEQUENCE [LARGE SCALE GENOMIC DNA]</scope>
    <source>
        <strain>IL1403</strain>
    </source>
</reference>
<comment type="catalytic activity">
    <reaction evidence="3">
        <text>D-erythro-1-(imidazol-4-yl)glycerol 3-phosphate = 3-(imidazol-4-yl)-2-oxopropyl phosphate + H2O</text>
        <dbReference type="Rhea" id="RHEA:11040"/>
        <dbReference type="ChEBI" id="CHEBI:15377"/>
        <dbReference type="ChEBI" id="CHEBI:57766"/>
        <dbReference type="ChEBI" id="CHEBI:58278"/>
        <dbReference type="EC" id="4.2.1.19"/>
    </reaction>
</comment>
<comment type="cofactor">
    <cofactor evidence="2">
        <name>Mn(2+)</name>
        <dbReference type="ChEBI" id="CHEBI:29035"/>
    </cofactor>
    <text evidence="2">Binds 2 manganese ions per subunit.</text>
</comment>
<comment type="pathway">
    <text evidence="3">Amino-acid biosynthesis; L-histidine biosynthesis; L-histidine from 5-phospho-alpha-D-ribose 1-diphosphate: step 6/9.</text>
</comment>
<comment type="subcellular location">
    <subcellularLocation>
        <location evidence="1">Cytoplasm</location>
    </subcellularLocation>
</comment>
<comment type="similarity">
    <text evidence="4">Belongs to the imidazoleglycerol-phosphate dehydratase family.</text>
</comment>
<comment type="caution">
    <text evidence="4">This protein is inactive in the dairy strain IL1403. The histidine biosynthesis pathway is not functional in the dairy strain IL1403.</text>
</comment>
<organism>
    <name type="scientific">Lactococcus lactis subsp. lactis (strain IL1403)</name>
    <name type="common">Streptococcus lactis</name>
    <dbReference type="NCBI Taxonomy" id="272623"/>
    <lineage>
        <taxon>Bacteria</taxon>
        <taxon>Bacillati</taxon>
        <taxon>Bacillota</taxon>
        <taxon>Bacilli</taxon>
        <taxon>Lactobacillales</taxon>
        <taxon>Streptococcaceae</taxon>
        <taxon>Lactococcus</taxon>
    </lineage>
</organism>